<organism>
    <name type="scientific">Saccharomyces cerevisiae (strain ATCC 204508 / S288c)</name>
    <name type="common">Baker's yeast</name>
    <dbReference type="NCBI Taxonomy" id="559292"/>
    <lineage>
        <taxon>Eukaryota</taxon>
        <taxon>Fungi</taxon>
        <taxon>Dikarya</taxon>
        <taxon>Ascomycota</taxon>
        <taxon>Saccharomycotina</taxon>
        <taxon>Saccharomycetes</taxon>
        <taxon>Saccharomycetales</taxon>
        <taxon>Saccharomycetaceae</taxon>
        <taxon>Saccharomyces</taxon>
    </lineage>
</organism>
<comment type="miscellaneous">
    <text evidence="1">Almost completely overlaps YOR365C.</text>
</comment>
<comment type="caution">
    <text evidence="2">Product of a dubious gene prediction unlikely to encode a functional protein. Because of that it is not part of the S.cerevisiae S288c complete/reference proteome set.</text>
</comment>
<accession>Q08872</accession>
<gene>
    <name type="ordered locus">YOR366W</name>
    <name type="ORF">O6664</name>
</gene>
<name>YO366_YEAST</name>
<evidence type="ECO:0000305" key="1"/>
<evidence type="ECO:0000305" key="2">
    <source>
    </source>
</evidence>
<reference key="1">
    <citation type="journal article" date="1997" name="Nature">
        <title>The nucleotide sequence of Saccharomyces cerevisiae chromosome XV.</title>
        <authorList>
            <person name="Dujon B."/>
            <person name="Albermann K."/>
            <person name="Aldea M."/>
            <person name="Alexandraki D."/>
            <person name="Ansorge W."/>
            <person name="Arino J."/>
            <person name="Benes V."/>
            <person name="Bohn C."/>
            <person name="Bolotin-Fukuhara M."/>
            <person name="Bordonne R."/>
            <person name="Boyer J."/>
            <person name="Camasses A."/>
            <person name="Casamayor A."/>
            <person name="Casas C."/>
            <person name="Cheret G."/>
            <person name="Cziepluch C."/>
            <person name="Daignan-Fornier B."/>
            <person name="Dang V.-D."/>
            <person name="de Haan M."/>
            <person name="Delius H."/>
            <person name="Durand P."/>
            <person name="Fairhead C."/>
            <person name="Feldmann H."/>
            <person name="Gaillon L."/>
            <person name="Galisson F."/>
            <person name="Gamo F.-J."/>
            <person name="Gancedo C."/>
            <person name="Goffeau A."/>
            <person name="Goulding S.E."/>
            <person name="Grivell L.A."/>
            <person name="Habbig B."/>
            <person name="Hand N.J."/>
            <person name="Hani J."/>
            <person name="Hattenhorst U."/>
            <person name="Hebling U."/>
            <person name="Hernando Y."/>
            <person name="Herrero E."/>
            <person name="Heumann K."/>
            <person name="Hiesel R."/>
            <person name="Hilger F."/>
            <person name="Hofmann B."/>
            <person name="Hollenberg C.P."/>
            <person name="Hughes B."/>
            <person name="Jauniaux J.-C."/>
            <person name="Kalogeropoulos A."/>
            <person name="Katsoulou C."/>
            <person name="Kordes E."/>
            <person name="Lafuente M.J."/>
            <person name="Landt O."/>
            <person name="Louis E.J."/>
            <person name="Maarse A.C."/>
            <person name="Madania A."/>
            <person name="Mannhaupt G."/>
            <person name="Marck C."/>
            <person name="Martin R.P."/>
            <person name="Mewes H.-W."/>
            <person name="Michaux G."/>
            <person name="Paces V."/>
            <person name="Parle-McDermott A.G."/>
            <person name="Pearson B.M."/>
            <person name="Perrin A."/>
            <person name="Pettersson B."/>
            <person name="Poch O."/>
            <person name="Pohl T.M."/>
            <person name="Poirey R."/>
            <person name="Portetelle D."/>
            <person name="Pujol A."/>
            <person name="Purnelle B."/>
            <person name="Ramezani Rad M."/>
            <person name="Rechmann S."/>
            <person name="Schwager C."/>
            <person name="Schweizer M."/>
            <person name="Sor F."/>
            <person name="Sterky F."/>
            <person name="Tarassov I.A."/>
            <person name="Teodoru C."/>
            <person name="Tettelin H."/>
            <person name="Thierry A."/>
            <person name="Tobiasch E."/>
            <person name="Tzermia M."/>
            <person name="Uhlen M."/>
            <person name="Unseld M."/>
            <person name="Valens M."/>
            <person name="Vandenbol M."/>
            <person name="Vetter I."/>
            <person name="Vlcek C."/>
            <person name="Voet M."/>
            <person name="Volckaert G."/>
            <person name="Voss H."/>
            <person name="Wambutt R."/>
            <person name="Wedler H."/>
            <person name="Wiemann S."/>
            <person name="Winsor B."/>
            <person name="Wolfe K.H."/>
            <person name="Zollner A."/>
            <person name="Zumstein E."/>
            <person name="Kleine K."/>
        </authorList>
    </citation>
    <scope>NUCLEOTIDE SEQUENCE [LARGE SCALE GENOMIC DNA]</scope>
    <source>
        <strain>ATCC 204508 / S288c</strain>
    </source>
</reference>
<reference key="2">
    <citation type="journal article" date="2014" name="G3 (Bethesda)">
        <title>The reference genome sequence of Saccharomyces cerevisiae: Then and now.</title>
        <authorList>
            <person name="Engel S.R."/>
            <person name="Dietrich F.S."/>
            <person name="Fisk D.G."/>
            <person name="Binkley G."/>
            <person name="Balakrishnan R."/>
            <person name="Costanzo M.C."/>
            <person name="Dwight S.S."/>
            <person name="Hitz B.C."/>
            <person name="Karra K."/>
            <person name="Nash R.S."/>
            <person name="Weng S."/>
            <person name="Wong E.D."/>
            <person name="Lloyd P."/>
            <person name="Skrzypek M.S."/>
            <person name="Miyasato S.R."/>
            <person name="Simison M."/>
            <person name="Cherry J.M."/>
        </authorList>
    </citation>
    <scope>GENOME REANNOTATION</scope>
    <source>
        <strain>ATCC 204508 / S288c</strain>
    </source>
</reference>
<dbReference type="EMBL" id="Z75272">
    <property type="protein sequence ID" value="CAA99693.1"/>
    <property type="molecule type" value="Genomic_DNA"/>
</dbReference>
<dbReference type="PIR" id="S67278">
    <property type="entry name" value="S67278"/>
</dbReference>
<dbReference type="DIP" id="DIP-5439N"/>
<dbReference type="PaxDb" id="4932-YOR366W"/>
<dbReference type="EnsemblFungi" id="YOR366W_mRNA">
    <property type="protein sequence ID" value="YOR366W"/>
    <property type="gene ID" value="YOR366W"/>
</dbReference>
<dbReference type="AGR" id="SGD:S000005893"/>
<dbReference type="SGD" id="S000005893">
    <property type="gene designation" value="YOR366W"/>
</dbReference>
<dbReference type="HOGENOM" id="CLU_2086674_0_0_1"/>
<protein>
    <recommendedName>
        <fullName>Putative uncharacterized protein YOR366W</fullName>
    </recommendedName>
</protein>
<sequence>MVMFSLIIVCASTLKNRVLFLGKKAASKYDAENCESLAQVNRAEVLRYSLVYASNGTGNRVDALFSSVKELETWKVELLMEIACICRKIASKTKIRDKEKTLMGSILILFTSINQRG</sequence>
<feature type="chain" id="PRO_0000299743" description="Putative uncharacterized protein YOR366W">
    <location>
        <begin position="1"/>
        <end position="117"/>
    </location>
</feature>
<proteinExistence type="uncertain"/>